<feature type="signal peptide" evidence="1">
    <location>
        <begin position="1"/>
        <end position="21"/>
    </location>
</feature>
<feature type="chain" id="PRO_0000001107" description="Afamin">
    <location>
        <begin position="22"/>
        <end position="608"/>
    </location>
</feature>
<feature type="domain" description="Albumin 1" evidence="3">
    <location>
        <begin position="22"/>
        <end position="210"/>
    </location>
</feature>
<feature type="domain" description="Albumin 2" evidence="3">
    <location>
        <begin position="211"/>
        <end position="403"/>
    </location>
</feature>
<feature type="domain" description="Albumin 3" evidence="3">
    <location>
        <begin position="404"/>
        <end position="599"/>
    </location>
</feature>
<feature type="region of interest" description="Binding pocket for hydrophobic ligands" evidence="1">
    <location>
        <begin position="215"/>
        <end position="319"/>
    </location>
</feature>
<feature type="region of interest" description="Disordered" evidence="4">
    <location>
        <begin position="583"/>
        <end position="608"/>
    </location>
</feature>
<feature type="compositionally biased region" description="Basic and acidic residues" evidence="4">
    <location>
        <begin position="596"/>
        <end position="608"/>
    </location>
</feature>
<feature type="glycosylation site" description="N-linked (GlcNAc...) asparagine" evidence="5 6 8">
    <location>
        <position position="33"/>
    </location>
</feature>
<feature type="glycosylation site" description="N-linked (GlcNAc...) asparagine" evidence="2">
    <location>
        <position position="109"/>
    </location>
</feature>
<feature type="glycosylation site" description="N-linked (GlcNAc...) asparagine" evidence="6">
    <location>
        <position position="153"/>
    </location>
</feature>
<feature type="glycosylation site" description="N-linked (GlcNAc...) asparagine" evidence="5 6 8">
    <location>
        <position position="402"/>
    </location>
</feature>
<feature type="glycosylation site" description="N-linked (GlcNAc...) asparagine" evidence="2">
    <location>
        <position position="488"/>
    </location>
</feature>
<feature type="disulfide bond" evidence="3">
    <location>
        <begin position="77"/>
        <end position="86"/>
    </location>
</feature>
<feature type="disulfide bond" evidence="3">
    <location>
        <begin position="99"/>
        <end position="114"/>
    </location>
</feature>
<feature type="disulfide bond" evidence="3">
    <location>
        <begin position="113"/>
        <end position="124"/>
    </location>
</feature>
<feature type="disulfide bond" evidence="3">
    <location>
        <begin position="148"/>
        <end position="193"/>
    </location>
</feature>
<feature type="disulfide bond" evidence="3">
    <location>
        <begin position="192"/>
        <end position="201"/>
    </location>
</feature>
<feature type="disulfide bond" evidence="3">
    <location>
        <begin position="224"/>
        <end position="270"/>
    </location>
</feature>
<feature type="disulfide bond" evidence="3">
    <location>
        <begin position="269"/>
        <end position="277"/>
    </location>
</feature>
<feature type="disulfide bond" evidence="3">
    <location>
        <begin position="289"/>
        <end position="303"/>
    </location>
</feature>
<feature type="disulfide bond" evidence="3">
    <location>
        <begin position="302"/>
        <end position="313"/>
    </location>
</feature>
<feature type="disulfide bond" evidence="3">
    <location>
        <begin position="340"/>
        <end position="385"/>
    </location>
</feature>
<feature type="disulfide bond" evidence="3">
    <location>
        <begin position="384"/>
        <end position="393"/>
    </location>
</feature>
<feature type="disulfide bond" evidence="3">
    <location>
        <begin position="416"/>
        <end position="462"/>
    </location>
</feature>
<feature type="disulfide bond" evidence="3">
    <location>
        <begin position="461"/>
        <end position="470"/>
    </location>
</feature>
<feature type="disulfide bond" evidence="3">
    <location>
        <begin position="483"/>
        <end position="499"/>
    </location>
</feature>
<feature type="disulfide bond" evidence="3">
    <location>
        <begin position="498"/>
        <end position="509"/>
    </location>
</feature>
<feature type="disulfide bond" evidence="3">
    <location>
        <begin position="580"/>
        <end position="589"/>
    </location>
</feature>
<feature type="splice variant" id="VSP_023387" description="In isoform 2." evidence="10 11">
    <original>H</original>
    <variation>Q</variation>
    <location>
        <position position="430"/>
    </location>
</feature>
<feature type="splice variant" id="VSP_023388" description="In isoform 2." evidence="10 11">
    <location>
        <begin position="431"/>
        <end position="608"/>
    </location>
</feature>
<feature type="splice variant" id="VSP_023389" description="In isoform 3." evidence="12">
    <original>KQR</original>
    <variation>NKITDQ</variation>
    <location>
        <begin position="606"/>
        <end position="608"/>
    </location>
</feature>
<feature type="sequence conflict" description="In Ref. 1; CAA09471 and 3; AAH26681." evidence="13" ref="1 3">
    <original>T</original>
    <variation>A</variation>
    <location>
        <position position="44"/>
    </location>
</feature>
<feature type="sequence conflict" description="In Ref. 1; CAA09471." evidence="13" ref="1">
    <original>N</original>
    <variation>K</variation>
    <location>
        <position position="154"/>
    </location>
</feature>
<feature type="sequence conflict" description="In Ref. 3; AAI00598." evidence="13" ref="3">
    <original>S</original>
    <variation>N</variation>
    <location>
        <position position="280"/>
    </location>
</feature>
<feature type="sequence conflict" description="In Ref. 1; CAA09471." evidence="13" ref="1">
    <original>V</original>
    <variation>E</variation>
    <location>
        <position position="285"/>
    </location>
</feature>
<feature type="sequence conflict" description="In Ref. 3; AAI00598." evidence="13" ref="3">
    <original>I</original>
    <variation>V</variation>
    <location>
        <position position="295"/>
    </location>
</feature>
<feature type="sequence conflict" description="In Ref. 3; AAI00598." evidence="13" ref="3">
    <original>T</original>
    <variation>I</variation>
    <location>
        <position position="307"/>
    </location>
</feature>
<feature type="sequence conflict" description="In Ref. 1; CAA09471." evidence="13" ref="1">
    <original>E</original>
    <variation>R</variation>
    <location>
        <position position="369"/>
    </location>
</feature>
<feature type="sequence conflict" description="In Ref. 1; CAA09471." evidence="13" ref="1">
    <original>K</original>
    <variation>N</variation>
    <location>
        <position position="417"/>
    </location>
</feature>
<feature type="sequence conflict" description="In Ref. 1; CAA09471." evidence="13" ref="1">
    <original>E</original>
    <variation>A</variation>
    <location>
        <position position="520"/>
    </location>
</feature>
<comment type="function">
    <text evidence="1">Functions as a carrier for hydrophobic molecules in body fluids. Essential for the solubility and activity of lipidated Wnt family members, including WNT1, WNT2B, WNT3, WNT3A, WNT5A, WNT7A, WNT7B, WNT8, WNT9A, WNT9B, WNT10A and WNT10B. Binds vitamin E. May transport vitamin E in body fluids under conditions where the lipoprotein system is not sufficient. May be involved in the transport of vitamin E across the blood-brain barrier.</text>
</comment>
<comment type="subunit">
    <text evidence="1 9">Forms a 1:1 complex with Wnt family members; interacts with WNT1, WNT2B, WNT3, WNT5A, WNT7A, WNT7B, WNT8, WNT9A, WNT9B, WNT10A and WNT10B (By similarity). Interacts with WNT3A (PubMed:26902720).</text>
</comment>
<comment type="subcellular location">
    <subcellularLocation>
        <location evidence="1">Secreted</location>
    </subcellularLocation>
</comment>
<comment type="alternative products">
    <event type="alternative splicing"/>
    <isoform>
        <id>O89020-1</id>
        <name>1</name>
        <sequence type="displayed"/>
    </isoform>
    <isoform>
        <id>O89020-2</id>
        <name>2</name>
        <sequence type="described" ref="VSP_023387 VSP_023388"/>
    </isoform>
    <isoform>
        <id>O89020-3</id>
        <name>3</name>
        <sequence type="described" ref="VSP_023389"/>
    </isoform>
</comment>
<comment type="tissue specificity">
    <text evidence="7">Detected in brain, especially on brain capillaries (at protein level). Expressed in isolated brain capillaries.</text>
</comment>
<comment type="domain">
    <text evidence="1">The second albumin domain forms a deep binding pocket that contains palmitoleic acid (in vitro). Palmitoleic acid is most likely not the physiological ligand. Instead, this pocket may accomodate the covalently bound lipid moiety of Wnt family members.</text>
</comment>
<comment type="PTM">
    <text evidence="1">N-glycosylated; more than 90% of the glycans are sialylated.</text>
</comment>
<comment type="similarity">
    <text evidence="3">Belongs to the ALB/AFP/VDB family.</text>
</comment>
<comment type="sequence caution" evidence="13">
    <conflict type="miscellaneous discrepancy">
        <sequence resource="EMBL-CDS" id="AAH26681"/>
    </conflict>
    <text>Contaminating sequence.</text>
</comment>
<gene>
    <name type="primary">Afm</name>
</gene>
<protein>
    <recommendedName>
        <fullName>Afamin</fullName>
    </recommendedName>
    <alternativeName>
        <fullName>Alpha-albumin</fullName>
        <shortName>Alpha-Alb</shortName>
    </alternativeName>
</protein>
<reference key="1">
    <citation type="submission" date="1998-09" db="EMBL/GenBank/DDBJ databases">
        <authorList>
            <person name="van Reeth T."/>
            <person name="Gabant P."/>
            <person name="Dreze P."/>
            <person name="Szpirer J."/>
            <person name="Szpirer C."/>
        </authorList>
    </citation>
    <scope>NUCLEOTIDE SEQUENCE [MRNA] (ISOFORM 3)</scope>
    <source>
        <tissue>Diaphragm</tissue>
    </source>
</reference>
<reference key="2">
    <citation type="journal article" date="2005" name="Science">
        <title>The transcriptional landscape of the mammalian genome.</title>
        <authorList>
            <person name="Carninci P."/>
            <person name="Kasukawa T."/>
            <person name="Katayama S."/>
            <person name="Gough J."/>
            <person name="Frith M.C."/>
            <person name="Maeda N."/>
            <person name="Oyama R."/>
            <person name="Ravasi T."/>
            <person name="Lenhard B."/>
            <person name="Wells C."/>
            <person name="Kodzius R."/>
            <person name="Shimokawa K."/>
            <person name="Bajic V.B."/>
            <person name="Brenner S.E."/>
            <person name="Batalov S."/>
            <person name="Forrest A.R."/>
            <person name="Zavolan M."/>
            <person name="Davis M.J."/>
            <person name="Wilming L.G."/>
            <person name="Aidinis V."/>
            <person name="Allen J.E."/>
            <person name="Ambesi-Impiombato A."/>
            <person name="Apweiler R."/>
            <person name="Aturaliya R.N."/>
            <person name="Bailey T.L."/>
            <person name="Bansal M."/>
            <person name="Baxter L."/>
            <person name="Beisel K.W."/>
            <person name="Bersano T."/>
            <person name="Bono H."/>
            <person name="Chalk A.M."/>
            <person name="Chiu K.P."/>
            <person name="Choudhary V."/>
            <person name="Christoffels A."/>
            <person name="Clutterbuck D.R."/>
            <person name="Crowe M.L."/>
            <person name="Dalla E."/>
            <person name="Dalrymple B.P."/>
            <person name="de Bono B."/>
            <person name="Della Gatta G."/>
            <person name="di Bernardo D."/>
            <person name="Down T."/>
            <person name="Engstrom P."/>
            <person name="Fagiolini M."/>
            <person name="Faulkner G."/>
            <person name="Fletcher C.F."/>
            <person name="Fukushima T."/>
            <person name="Furuno M."/>
            <person name="Futaki S."/>
            <person name="Gariboldi M."/>
            <person name="Georgii-Hemming P."/>
            <person name="Gingeras T.R."/>
            <person name="Gojobori T."/>
            <person name="Green R.E."/>
            <person name="Gustincich S."/>
            <person name="Harbers M."/>
            <person name="Hayashi Y."/>
            <person name="Hensch T.K."/>
            <person name="Hirokawa N."/>
            <person name="Hill D."/>
            <person name="Huminiecki L."/>
            <person name="Iacono M."/>
            <person name="Ikeo K."/>
            <person name="Iwama A."/>
            <person name="Ishikawa T."/>
            <person name="Jakt M."/>
            <person name="Kanapin A."/>
            <person name="Katoh M."/>
            <person name="Kawasawa Y."/>
            <person name="Kelso J."/>
            <person name="Kitamura H."/>
            <person name="Kitano H."/>
            <person name="Kollias G."/>
            <person name="Krishnan S.P."/>
            <person name="Kruger A."/>
            <person name="Kummerfeld S.K."/>
            <person name="Kurochkin I.V."/>
            <person name="Lareau L.F."/>
            <person name="Lazarevic D."/>
            <person name="Lipovich L."/>
            <person name="Liu J."/>
            <person name="Liuni S."/>
            <person name="McWilliam S."/>
            <person name="Madan Babu M."/>
            <person name="Madera M."/>
            <person name="Marchionni L."/>
            <person name="Matsuda H."/>
            <person name="Matsuzawa S."/>
            <person name="Miki H."/>
            <person name="Mignone F."/>
            <person name="Miyake S."/>
            <person name="Morris K."/>
            <person name="Mottagui-Tabar S."/>
            <person name="Mulder N."/>
            <person name="Nakano N."/>
            <person name="Nakauchi H."/>
            <person name="Ng P."/>
            <person name="Nilsson R."/>
            <person name="Nishiguchi S."/>
            <person name="Nishikawa S."/>
            <person name="Nori F."/>
            <person name="Ohara O."/>
            <person name="Okazaki Y."/>
            <person name="Orlando V."/>
            <person name="Pang K.C."/>
            <person name="Pavan W.J."/>
            <person name="Pavesi G."/>
            <person name="Pesole G."/>
            <person name="Petrovsky N."/>
            <person name="Piazza S."/>
            <person name="Reed J."/>
            <person name="Reid J.F."/>
            <person name="Ring B.Z."/>
            <person name="Ringwald M."/>
            <person name="Rost B."/>
            <person name="Ruan Y."/>
            <person name="Salzberg S.L."/>
            <person name="Sandelin A."/>
            <person name="Schneider C."/>
            <person name="Schoenbach C."/>
            <person name="Sekiguchi K."/>
            <person name="Semple C.A."/>
            <person name="Seno S."/>
            <person name="Sessa L."/>
            <person name="Sheng Y."/>
            <person name="Shibata Y."/>
            <person name="Shimada H."/>
            <person name="Shimada K."/>
            <person name="Silva D."/>
            <person name="Sinclair B."/>
            <person name="Sperling S."/>
            <person name="Stupka E."/>
            <person name="Sugiura K."/>
            <person name="Sultana R."/>
            <person name="Takenaka Y."/>
            <person name="Taki K."/>
            <person name="Tammoja K."/>
            <person name="Tan S.L."/>
            <person name="Tang S."/>
            <person name="Taylor M.S."/>
            <person name="Tegner J."/>
            <person name="Teichmann S.A."/>
            <person name="Ueda H.R."/>
            <person name="van Nimwegen E."/>
            <person name="Verardo R."/>
            <person name="Wei C.L."/>
            <person name="Yagi K."/>
            <person name="Yamanishi H."/>
            <person name="Zabarovsky E."/>
            <person name="Zhu S."/>
            <person name="Zimmer A."/>
            <person name="Hide W."/>
            <person name="Bult C."/>
            <person name="Grimmond S.M."/>
            <person name="Teasdale R.D."/>
            <person name="Liu E.T."/>
            <person name="Brusic V."/>
            <person name="Quackenbush J."/>
            <person name="Wahlestedt C."/>
            <person name="Mattick J.S."/>
            <person name="Hume D.A."/>
            <person name="Kai C."/>
            <person name="Sasaki D."/>
            <person name="Tomaru Y."/>
            <person name="Fukuda S."/>
            <person name="Kanamori-Katayama M."/>
            <person name="Suzuki M."/>
            <person name="Aoki J."/>
            <person name="Arakawa T."/>
            <person name="Iida J."/>
            <person name="Imamura K."/>
            <person name="Itoh M."/>
            <person name="Kato T."/>
            <person name="Kawaji H."/>
            <person name="Kawagashira N."/>
            <person name="Kawashima T."/>
            <person name="Kojima M."/>
            <person name="Kondo S."/>
            <person name="Konno H."/>
            <person name="Nakano K."/>
            <person name="Ninomiya N."/>
            <person name="Nishio T."/>
            <person name="Okada M."/>
            <person name="Plessy C."/>
            <person name="Shibata K."/>
            <person name="Shiraki T."/>
            <person name="Suzuki S."/>
            <person name="Tagami M."/>
            <person name="Waki K."/>
            <person name="Watahiki A."/>
            <person name="Okamura-Oho Y."/>
            <person name="Suzuki H."/>
            <person name="Kawai J."/>
            <person name="Hayashizaki Y."/>
        </authorList>
    </citation>
    <scope>NUCLEOTIDE SEQUENCE [LARGE SCALE MRNA] (ISOFORM 2)</scope>
    <source>
        <strain>C57BL/6J</strain>
        <tissue>Kidney</tissue>
    </source>
</reference>
<reference key="3">
    <citation type="journal article" date="2004" name="Genome Res.">
        <title>The status, quality, and expansion of the NIH full-length cDNA project: the Mammalian Gene Collection (MGC).</title>
        <authorList>
            <consortium name="The MGC Project Team"/>
        </authorList>
    </citation>
    <scope>NUCLEOTIDE SEQUENCE [LARGE SCALE MRNA] (ISOFORM 1)</scope>
    <scope>NUCLEOTIDE SEQUENCE [LARGE SCALE MRNA] OF 18-608 (ISOFORM 2)</scope>
    <source>
        <strain>FVB/N</strain>
        <tissue>Kidney</tissue>
        <tissue>Liver</tissue>
    </source>
</reference>
<reference key="4">
    <citation type="journal article" date="2006" name="J. Proteome Res.">
        <title>Proteome-wide characterization of N-glycosylation events by diagonal chromatography.</title>
        <authorList>
            <person name="Ghesquiere B."/>
            <person name="Van Damme J."/>
            <person name="Martens L."/>
            <person name="Vandekerckhove J."/>
            <person name="Gevaert K."/>
        </authorList>
    </citation>
    <scope>GLYCOSYLATION [LARGE SCALE ANALYSIS] AT ASN-33 AND ASN-402</scope>
    <source>
        <strain>C57BL/6J</strain>
        <tissue>Plasma</tissue>
    </source>
</reference>
<reference key="5">
    <citation type="journal article" date="2007" name="J. Proteome Res.">
        <title>Enhanced analysis of the mouse plasma proteome using cysteine-containing tryptic glycopeptides.</title>
        <authorList>
            <person name="Bernhard O.K."/>
            <person name="Kapp E.A."/>
            <person name="Simpson R.J."/>
        </authorList>
    </citation>
    <scope>GLYCOSYLATION [LARGE SCALE ANALYSIS] AT ASN-33; ASN-153 AND ASN-402</scope>
    <source>
        <strain>C57BL/6J</strain>
        <tissue>Plasma</tissue>
    </source>
</reference>
<reference key="6">
    <citation type="journal article" date="2009" name="J. Neurochem.">
        <title>Afamin is synthesized by cerebrovascular endothelial cells and mediates alpha-tocopherol transport across an in vitro model of the blood-brain barrier.</title>
        <authorList>
            <person name="Kratzer I."/>
            <person name="Bernhart E."/>
            <person name="Wintersperger A."/>
            <person name="Hammer A."/>
            <person name="Waltl S."/>
            <person name="Malle E."/>
            <person name="Sperk G."/>
            <person name="Wietzorrek G."/>
            <person name="Dieplinger H."/>
            <person name="Sattler W."/>
        </authorList>
    </citation>
    <scope>TISSUE SPECIFICITY</scope>
</reference>
<reference key="7">
    <citation type="journal article" date="2009" name="J. Proteome Res.">
        <title>Glycoproteomics analysis of human liver tissue by combination of multiple enzyme digestion and hydrazide chemistry.</title>
        <authorList>
            <person name="Chen R."/>
            <person name="Jiang X."/>
            <person name="Sun D."/>
            <person name="Han G."/>
            <person name="Wang F."/>
            <person name="Ye M."/>
            <person name="Wang L."/>
            <person name="Zou H."/>
        </authorList>
    </citation>
    <scope>GLYCOSYLATION [LARGE SCALE ANALYSIS] AT ASN-33 AND ASN-402</scope>
    <source>
        <tissue>Liver</tissue>
    </source>
</reference>
<reference key="8">
    <citation type="journal article" date="2010" name="Cell">
        <title>A tissue-specific atlas of mouse protein phosphorylation and expression.</title>
        <authorList>
            <person name="Huttlin E.L."/>
            <person name="Jedrychowski M.P."/>
            <person name="Elias J.E."/>
            <person name="Goswami T."/>
            <person name="Rad R."/>
            <person name="Beausoleil S.A."/>
            <person name="Villen J."/>
            <person name="Haas W."/>
            <person name="Sowa M.E."/>
            <person name="Gygi S.P."/>
        </authorList>
    </citation>
    <scope>IDENTIFICATION BY MASS SPECTROMETRY [LARGE SCALE ANALYSIS]</scope>
    <source>
        <tissue>Brown adipose tissue</tissue>
        <tissue>Heart</tissue>
        <tissue>Kidney</tissue>
        <tissue>Liver</tissue>
        <tissue>Lung</tissue>
        <tissue>Spleen</tissue>
        <tissue>Testis</tissue>
    </source>
</reference>
<reference key="9">
    <citation type="journal article" date="2016" name="Elife">
        <title>Active and water-soluble form of lipidated Wnt protein is maintained by a serum glycoprotein afamin/alpha-albumin.</title>
        <authorList>
            <person name="Mihara E."/>
            <person name="Hirai H."/>
            <person name="Yamamoto H."/>
            <person name="Tamura-Kawakami K."/>
            <person name="Matano M."/>
            <person name="Kikuchi A."/>
            <person name="Sato T."/>
            <person name="Takagi J."/>
        </authorList>
    </citation>
    <scope>INTERACTION WITH WNT3A</scope>
</reference>
<accession>O89020</accession>
<accession>Q3UNV0</accession>
<accession>Q497E6</accession>
<accession>Q8R0J9</accession>
<name>AFAM_MOUSE</name>
<sequence length="608" mass="69379">MRHLKLTGFIFFLLPLTESLALPTKPQDVDHFNATQKFIDENTTYLAIIAFSQYVQEASFDEVETLVKVMLDYRDRCWADNTLPECSKTANDAIQDMLCDMEGLPQKHNFSHCCGKAGFPRRLCFFYNKKANVGFLPPFPTLDPEEKCQAYKNNSESFLHLYMYEVARRNPFVFAPVLLAVAAWFEEAATTCCEQQQKATCFQAKAAPITQYLKASSSYQRNVCGALIKFGPKVLNSINVAVFSKKFPKIGFKDLTTLLEDVSSMYEGCCEGDVVHCIRSQSQVVNHICSKQDSISSKIKVCCEKKTLEREACIINANKDDRPEGLSLREAKFTESENVCQERDSDPDKFFAEFIYEYSRRHPDLSTPELLRITKVYMDFLEDCCSRENPAGCYRHVEDKFNETTQRSLAMVQQECKQFQELGKDTLQRHFLVKFTKAAPQLPMEELVSLSKEMVAALTTCCTLSDEFACVDNLADLVLGELCGVNTNRTINPAVDHCCKTDFAFRRHCFEHLKADTTYELPSVSALVSALHTDWCQPRKEDLQNKKHRFLVNLVKWMPGITDEEWLCLFTKFTAAREECSEVQEPESCFSPESSKTGDESQATEKQR</sequence>
<proteinExistence type="evidence at protein level"/>
<evidence type="ECO:0000250" key="1">
    <source>
        <dbReference type="UniProtKB" id="P43652"/>
    </source>
</evidence>
<evidence type="ECO:0000255" key="2"/>
<evidence type="ECO:0000255" key="3">
    <source>
        <dbReference type="PROSITE-ProRule" id="PRU00769"/>
    </source>
</evidence>
<evidence type="ECO:0000256" key="4">
    <source>
        <dbReference type="SAM" id="MobiDB-lite"/>
    </source>
</evidence>
<evidence type="ECO:0000269" key="5">
    <source>
    </source>
</evidence>
<evidence type="ECO:0000269" key="6">
    <source>
    </source>
</evidence>
<evidence type="ECO:0000269" key="7">
    <source>
    </source>
</evidence>
<evidence type="ECO:0000269" key="8">
    <source>
    </source>
</evidence>
<evidence type="ECO:0000269" key="9">
    <source>
    </source>
</evidence>
<evidence type="ECO:0000303" key="10">
    <source>
    </source>
</evidence>
<evidence type="ECO:0000303" key="11">
    <source>
    </source>
</evidence>
<evidence type="ECO:0000303" key="12">
    <source ref="1"/>
</evidence>
<evidence type="ECO:0000305" key="13"/>
<organism>
    <name type="scientific">Mus musculus</name>
    <name type="common">Mouse</name>
    <dbReference type="NCBI Taxonomy" id="10090"/>
    <lineage>
        <taxon>Eukaryota</taxon>
        <taxon>Metazoa</taxon>
        <taxon>Chordata</taxon>
        <taxon>Craniata</taxon>
        <taxon>Vertebrata</taxon>
        <taxon>Euteleostomi</taxon>
        <taxon>Mammalia</taxon>
        <taxon>Eutheria</taxon>
        <taxon>Euarchontoglires</taxon>
        <taxon>Glires</taxon>
        <taxon>Rodentia</taxon>
        <taxon>Myomorpha</taxon>
        <taxon>Muroidea</taxon>
        <taxon>Muridae</taxon>
        <taxon>Murinae</taxon>
        <taxon>Mus</taxon>
        <taxon>Mus</taxon>
    </lineage>
</organism>
<dbReference type="EMBL" id="AJ011080">
    <property type="protein sequence ID" value="CAA09471.1"/>
    <property type="molecule type" value="mRNA"/>
</dbReference>
<dbReference type="EMBL" id="AK143987">
    <property type="protein sequence ID" value="BAE25647.1"/>
    <property type="molecule type" value="mRNA"/>
</dbReference>
<dbReference type="EMBL" id="BC026681">
    <property type="protein sequence ID" value="AAH26681.1"/>
    <property type="status" value="ALT_SEQ"/>
    <property type="molecule type" value="mRNA"/>
</dbReference>
<dbReference type="EMBL" id="BC100597">
    <property type="protein sequence ID" value="AAI00598.1"/>
    <property type="molecule type" value="mRNA"/>
</dbReference>
<dbReference type="CCDS" id="CCDS39141.1">
    <molecule id="O89020-1"/>
</dbReference>
<dbReference type="RefSeq" id="NP_660128.2">
    <molecule id="O89020-1"/>
    <property type="nucleotide sequence ID" value="NM_145146.3"/>
</dbReference>
<dbReference type="SMR" id="O89020"/>
<dbReference type="FunCoup" id="O89020">
    <property type="interactions" value="108"/>
</dbReference>
<dbReference type="STRING" id="10090.ENSMUSP00000108804"/>
<dbReference type="GlyCosmos" id="O89020">
    <property type="glycosylation" value="5 sites, No reported glycans"/>
</dbReference>
<dbReference type="GlyGen" id="O89020">
    <property type="glycosylation" value="6 sites, 3 N-linked glycans (3 sites), 1 O-linked glycan (1 site)"/>
</dbReference>
<dbReference type="iPTMnet" id="O89020"/>
<dbReference type="PhosphoSitePlus" id="O89020"/>
<dbReference type="CPTAC" id="non-CPTAC-3328"/>
<dbReference type="jPOST" id="O89020"/>
<dbReference type="PaxDb" id="10090-ENSMUSP00000108804"/>
<dbReference type="PeptideAtlas" id="O89020"/>
<dbReference type="ProteomicsDB" id="281950">
    <molecule id="O89020-1"/>
</dbReference>
<dbReference type="ProteomicsDB" id="281951">
    <molecule id="O89020-2"/>
</dbReference>
<dbReference type="ProteomicsDB" id="281952">
    <molecule id="O89020-3"/>
</dbReference>
<dbReference type="Antibodypedia" id="1356">
    <property type="antibodies" value="266 antibodies from 32 providers"/>
</dbReference>
<dbReference type="DNASU" id="280662"/>
<dbReference type="Ensembl" id="ENSMUST00000113179.9">
    <molecule id="O89020-1"/>
    <property type="protein sequence ID" value="ENSMUSP00000108804.3"/>
    <property type="gene ID" value="ENSMUSG00000029369.18"/>
</dbReference>
<dbReference type="Ensembl" id="ENSMUST00000128740.2">
    <molecule id="O89020-2"/>
    <property type="protein sequence ID" value="ENSMUSP00000117180.2"/>
    <property type="gene ID" value="ENSMUSG00000029369.18"/>
</dbReference>
<dbReference type="GeneID" id="280662"/>
<dbReference type="KEGG" id="mmu:280662"/>
<dbReference type="UCSC" id="uc008ybb.1">
    <molecule id="O89020-2"/>
    <property type="organism name" value="mouse"/>
</dbReference>
<dbReference type="UCSC" id="uc008ybc.1">
    <molecule id="O89020-1"/>
    <property type="organism name" value="mouse"/>
</dbReference>
<dbReference type="AGR" id="MGI:2429409"/>
<dbReference type="CTD" id="173"/>
<dbReference type="MGI" id="MGI:2429409">
    <property type="gene designation" value="Afm"/>
</dbReference>
<dbReference type="VEuPathDB" id="HostDB:ENSMUSG00000029369"/>
<dbReference type="eggNOG" id="ENOG502R7EA">
    <property type="taxonomic scope" value="Eukaryota"/>
</dbReference>
<dbReference type="GeneTree" id="ENSGT00390000000113"/>
<dbReference type="HOGENOM" id="CLU_030161_2_0_1"/>
<dbReference type="InParanoid" id="O89020"/>
<dbReference type="OMA" id="KECCHTE"/>
<dbReference type="OrthoDB" id="9875082at2759"/>
<dbReference type="PhylomeDB" id="O89020"/>
<dbReference type="TreeFam" id="TF335561"/>
<dbReference type="BioGRID-ORCS" id="280662">
    <property type="hits" value="3 hits in 78 CRISPR screens"/>
</dbReference>
<dbReference type="ChiTaRS" id="Afm">
    <property type="organism name" value="mouse"/>
</dbReference>
<dbReference type="PRO" id="PR:O89020"/>
<dbReference type="Proteomes" id="UP000000589">
    <property type="component" value="Chromosome 5"/>
</dbReference>
<dbReference type="RNAct" id="O89020">
    <property type="molecule type" value="protein"/>
</dbReference>
<dbReference type="Bgee" id="ENSMUSG00000029369">
    <property type="expression patterns" value="Expressed in left lobe of liver and 55 other cell types or tissues"/>
</dbReference>
<dbReference type="GO" id="GO:0005615">
    <property type="term" value="C:extracellular space"/>
    <property type="evidence" value="ECO:0000250"/>
    <property type="project" value="UniProtKB"/>
</dbReference>
<dbReference type="GO" id="GO:0008431">
    <property type="term" value="F:vitamin E binding"/>
    <property type="evidence" value="ECO:0000250"/>
    <property type="project" value="UniProtKB"/>
</dbReference>
<dbReference type="GO" id="GO:0050821">
    <property type="term" value="P:protein stabilization"/>
    <property type="evidence" value="ECO:0000250"/>
    <property type="project" value="UniProtKB"/>
</dbReference>
<dbReference type="GO" id="GO:0071693">
    <property type="term" value="P:protein transport within extracellular region"/>
    <property type="evidence" value="ECO:0000250"/>
    <property type="project" value="UniProtKB"/>
</dbReference>
<dbReference type="GO" id="GO:0051180">
    <property type="term" value="P:vitamin transport"/>
    <property type="evidence" value="ECO:0000250"/>
    <property type="project" value="UniProtKB"/>
</dbReference>
<dbReference type="CDD" id="cd00015">
    <property type="entry name" value="ALBUMIN"/>
    <property type="match status" value="3"/>
</dbReference>
<dbReference type="FunFam" id="1.10.246.10:FF:000001">
    <property type="entry name" value="Serum albumin"/>
    <property type="match status" value="2"/>
</dbReference>
<dbReference type="FunFam" id="1.10.246.10:FF:000002">
    <property type="entry name" value="Serum albumin"/>
    <property type="match status" value="2"/>
</dbReference>
<dbReference type="FunFam" id="1.10.246.10:FF:000004">
    <property type="entry name" value="Serum albumin"/>
    <property type="match status" value="1"/>
</dbReference>
<dbReference type="Gene3D" id="1.10.246.10">
    <property type="match status" value="6"/>
</dbReference>
<dbReference type="InterPro" id="IPR000264">
    <property type="entry name" value="ALB/AFP/VDB"/>
</dbReference>
<dbReference type="InterPro" id="IPR020858">
    <property type="entry name" value="Serum_albumin-like"/>
</dbReference>
<dbReference type="InterPro" id="IPR021177">
    <property type="entry name" value="Serum_albumin/AFP/Afamin"/>
</dbReference>
<dbReference type="InterPro" id="IPR020857">
    <property type="entry name" value="Serum_albumin_CS"/>
</dbReference>
<dbReference type="InterPro" id="IPR014760">
    <property type="entry name" value="Serum_albumin_N"/>
</dbReference>
<dbReference type="PANTHER" id="PTHR11385:SF14">
    <property type="entry name" value="AFAMIN"/>
    <property type="match status" value="1"/>
</dbReference>
<dbReference type="PANTHER" id="PTHR11385">
    <property type="entry name" value="SERUM ALBUMIN-RELATED"/>
    <property type="match status" value="1"/>
</dbReference>
<dbReference type="Pfam" id="PF00273">
    <property type="entry name" value="Serum_albumin"/>
    <property type="match status" value="3"/>
</dbReference>
<dbReference type="PIRSF" id="PIRSF002520">
    <property type="entry name" value="Serum_albumin_subgroup"/>
    <property type="match status" value="1"/>
</dbReference>
<dbReference type="PRINTS" id="PR00803">
    <property type="entry name" value="AFETOPROTEIN"/>
</dbReference>
<dbReference type="PRINTS" id="PR00802">
    <property type="entry name" value="SERUMALBUMIN"/>
</dbReference>
<dbReference type="SMART" id="SM00103">
    <property type="entry name" value="ALBUMIN"/>
    <property type="match status" value="3"/>
</dbReference>
<dbReference type="SUPFAM" id="SSF48552">
    <property type="entry name" value="Serum albumin-like"/>
    <property type="match status" value="3"/>
</dbReference>
<dbReference type="PROSITE" id="PS00212">
    <property type="entry name" value="ALBUMIN_1"/>
    <property type="match status" value="2"/>
</dbReference>
<dbReference type="PROSITE" id="PS51438">
    <property type="entry name" value="ALBUMIN_2"/>
    <property type="match status" value="3"/>
</dbReference>
<keyword id="KW-0025">Alternative splicing</keyword>
<keyword id="KW-1015">Disulfide bond</keyword>
<keyword id="KW-0325">Glycoprotein</keyword>
<keyword id="KW-0653">Protein transport</keyword>
<keyword id="KW-1185">Reference proteome</keyword>
<keyword id="KW-0677">Repeat</keyword>
<keyword id="KW-0964">Secreted</keyword>
<keyword id="KW-0732">Signal</keyword>
<keyword id="KW-0813">Transport</keyword>